<sequence>MYVLLANPRGFCAGVDRAIEIVKRAIETLGAPIYVRHEVVHNRFVVDDLKQRGAIFVEELDEVPDDATVIFSAHGVPQAVRQEAERRGLKVFDATCPLVTKVHFEVARHCRAGRDVVLIGHAGHPEVEGTMGQWSRERGPGTIYLVEDIEQVATLDVRQPENLAYTTQTTLSVDDTMGIIEALRARYPAMQGPRHDDICYATQNRQDAVRDLARQCDLVLVVGSPNSSNSNRLSELARRDGVESYLIDNASEIDPAWIVGKQHIGLTAGASAPQVLVDGVLARLRELGASGVSELEGEPESMVFALPKELRLRLVG</sequence>
<name>ISPH_XANOP</name>
<reference key="1">
    <citation type="journal article" date="2008" name="BMC Genomics">
        <title>Genome sequence and rapid evolution of the rice pathogen Xanthomonas oryzae pv. oryzae PXO99A.</title>
        <authorList>
            <person name="Salzberg S.L."/>
            <person name="Sommer D.D."/>
            <person name="Schatz M.C."/>
            <person name="Phillippy A.M."/>
            <person name="Rabinowicz P.D."/>
            <person name="Tsuge S."/>
            <person name="Furutani A."/>
            <person name="Ochiai H."/>
            <person name="Delcher A.L."/>
            <person name="Kelley D."/>
            <person name="Madupu R."/>
            <person name="Puiu D."/>
            <person name="Radune D."/>
            <person name="Shumway M."/>
            <person name="Trapnell C."/>
            <person name="Aparna G."/>
            <person name="Jha G."/>
            <person name="Pandey A."/>
            <person name="Patil P.B."/>
            <person name="Ishihara H."/>
            <person name="Meyer D.F."/>
            <person name="Szurek B."/>
            <person name="Verdier V."/>
            <person name="Koebnik R."/>
            <person name="Dow J.M."/>
            <person name="Ryan R.P."/>
            <person name="Hirata H."/>
            <person name="Tsuyumu S."/>
            <person name="Won Lee S."/>
            <person name="Seo Y.-S."/>
            <person name="Sriariyanum M."/>
            <person name="Ronald P.C."/>
            <person name="Sonti R.V."/>
            <person name="Van Sluys M.-A."/>
            <person name="Leach J.E."/>
            <person name="White F.F."/>
            <person name="Bogdanove A.J."/>
        </authorList>
    </citation>
    <scope>NUCLEOTIDE SEQUENCE [LARGE SCALE GENOMIC DNA]</scope>
    <source>
        <strain>PXO99A</strain>
    </source>
</reference>
<comment type="function">
    <text evidence="1">Catalyzes the conversion of 1-hydroxy-2-methyl-2-(E)-butenyl 4-diphosphate (HMBPP) into a mixture of isopentenyl diphosphate (IPP) and dimethylallyl diphosphate (DMAPP). Acts in the terminal step of the DOXP/MEP pathway for isoprenoid precursor biosynthesis.</text>
</comment>
<comment type="catalytic activity">
    <reaction evidence="1">
        <text>isopentenyl diphosphate + 2 oxidized [2Fe-2S]-[ferredoxin] + H2O = (2E)-4-hydroxy-3-methylbut-2-enyl diphosphate + 2 reduced [2Fe-2S]-[ferredoxin] + 2 H(+)</text>
        <dbReference type="Rhea" id="RHEA:24488"/>
        <dbReference type="Rhea" id="RHEA-COMP:10000"/>
        <dbReference type="Rhea" id="RHEA-COMP:10001"/>
        <dbReference type="ChEBI" id="CHEBI:15377"/>
        <dbReference type="ChEBI" id="CHEBI:15378"/>
        <dbReference type="ChEBI" id="CHEBI:33737"/>
        <dbReference type="ChEBI" id="CHEBI:33738"/>
        <dbReference type="ChEBI" id="CHEBI:128753"/>
        <dbReference type="ChEBI" id="CHEBI:128769"/>
        <dbReference type="EC" id="1.17.7.4"/>
    </reaction>
</comment>
<comment type="catalytic activity">
    <reaction evidence="1">
        <text>dimethylallyl diphosphate + 2 oxidized [2Fe-2S]-[ferredoxin] + H2O = (2E)-4-hydroxy-3-methylbut-2-enyl diphosphate + 2 reduced [2Fe-2S]-[ferredoxin] + 2 H(+)</text>
        <dbReference type="Rhea" id="RHEA:24825"/>
        <dbReference type="Rhea" id="RHEA-COMP:10000"/>
        <dbReference type="Rhea" id="RHEA-COMP:10001"/>
        <dbReference type="ChEBI" id="CHEBI:15377"/>
        <dbReference type="ChEBI" id="CHEBI:15378"/>
        <dbReference type="ChEBI" id="CHEBI:33737"/>
        <dbReference type="ChEBI" id="CHEBI:33738"/>
        <dbReference type="ChEBI" id="CHEBI:57623"/>
        <dbReference type="ChEBI" id="CHEBI:128753"/>
        <dbReference type="EC" id="1.17.7.4"/>
    </reaction>
</comment>
<comment type="cofactor">
    <cofactor evidence="1">
        <name>[4Fe-4S] cluster</name>
        <dbReference type="ChEBI" id="CHEBI:49883"/>
    </cofactor>
    <text evidence="1">Binds 1 [4Fe-4S] cluster per subunit.</text>
</comment>
<comment type="pathway">
    <text evidence="1">Isoprenoid biosynthesis; dimethylallyl diphosphate biosynthesis; dimethylallyl diphosphate from (2E)-4-hydroxy-3-methylbutenyl diphosphate: step 1/1.</text>
</comment>
<comment type="pathway">
    <text evidence="1">Isoprenoid biosynthesis; isopentenyl diphosphate biosynthesis via DXP pathway; isopentenyl diphosphate from 1-deoxy-D-xylulose 5-phosphate: step 6/6.</text>
</comment>
<comment type="similarity">
    <text evidence="1">Belongs to the IspH family.</text>
</comment>
<evidence type="ECO:0000255" key="1">
    <source>
        <dbReference type="HAMAP-Rule" id="MF_00191"/>
    </source>
</evidence>
<organism>
    <name type="scientific">Xanthomonas oryzae pv. oryzae (strain PXO99A)</name>
    <dbReference type="NCBI Taxonomy" id="360094"/>
    <lineage>
        <taxon>Bacteria</taxon>
        <taxon>Pseudomonadati</taxon>
        <taxon>Pseudomonadota</taxon>
        <taxon>Gammaproteobacteria</taxon>
        <taxon>Lysobacterales</taxon>
        <taxon>Lysobacteraceae</taxon>
        <taxon>Xanthomonas</taxon>
    </lineage>
</organism>
<keyword id="KW-0004">4Fe-4S</keyword>
<keyword id="KW-0408">Iron</keyword>
<keyword id="KW-0411">Iron-sulfur</keyword>
<keyword id="KW-0414">Isoprene biosynthesis</keyword>
<keyword id="KW-0479">Metal-binding</keyword>
<keyword id="KW-0560">Oxidoreductase</keyword>
<feature type="chain" id="PRO_1000098990" description="4-hydroxy-3-methylbut-2-enyl diphosphate reductase">
    <location>
        <begin position="1"/>
        <end position="316"/>
    </location>
</feature>
<feature type="active site" description="Proton donor" evidence="1">
    <location>
        <position position="126"/>
    </location>
</feature>
<feature type="binding site" evidence="1">
    <location>
        <position position="12"/>
    </location>
    <ligand>
        <name>[4Fe-4S] cluster</name>
        <dbReference type="ChEBI" id="CHEBI:49883"/>
    </ligand>
</feature>
<feature type="binding site" evidence="1">
    <location>
        <position position="41"/>
    </location>
    <ligand>
        <name>(2E)-4-hydroxy-3-methylbut-2-enyl diphosphate</name>
        <dbReference type="ChEBI" id="CHEBI:128753"/>
    </ligand>
</feature>
<feature type="binding site" evidence="1">
    <location>
        <position position="41"/>
    </location>
    <ligand>
        <name>dimethylallyl diphosphate</name>
        <dbReference type="ChEBI" id="CHEBI:57623"/>
    </ligand>
</feature>
<feature type="binding site" evidence="1">
    <location>
        <position position="41"/>
    </location>
    <ligand>
        <name>isopentenyl diphosphate</name>
        <dbReference type="ChEBI" id="CHEBI:128769"/>
    </ligand>
</feature>
<feature type="binding site" evidence="1">
    <location>
        <position position="74"/>
    </location>
    <ligand>
        <name>(2E)-4-hydroxy-3-methylbut-2-enyl diphosphate</name>
        <dbReference type="ChEBI" id="CHEBI:128753"/>
    </ligand>
</feature>
<feature type="binding site" evidence="1">
    <location>
        <position position="74"/>
    </location>
    <ligand>
        <name>dimethylallyl diphosphate</name>
        <dbReference type="ChEBI" id="CHEBI:57623"/>
    </ligand>
</feature>
<feature type="binding site" evidence="1">
    <location>
        <position position="74"/>
    </location>
    <ligand>
        <name>isopentenyl diphosphate</name>
        <dbReference type="ChEBI" id="CHEBI:128769"/>
    </ligand>
</feature>
<feature type="binding site" evidence="1">
    <location>
        <position position="96"/>
    </location>
    <ligand>
        <name>[4Fe-4S] cluster</name>
        <dbReference type="ChEBI" id="CHEBI:49883"/>
    </ligand>
</feature>
<feature type="binding site" evidence="1">
    <location>
        <position position="124"/>
    </location>
    <ligand>
        <name>(2E)-4-hydroxy-3-methylbut-2-enyl diphosphate</name>
        <dbReference type="ChEBI" id="CHEBI:128753"/>
    </ligand>
</feature>
<feature type="binding site" evidence="1">
    <location>
        <position position="124"/>
    </location>
    <ligand>
        <name>dimethylallyl diphosphate</name>
        <dbReference type="ChEBI" id="CHEBI:57623"/>
    </ligand>
</feature>
<feature type="binding site" evidence="1">
    <location>
        <position position="124"/>
    </location>
    <ligand>
        <name>isopentenyl diphosphate</name>
        <dbReference type="ChEBI" id="CHEBI:128769"/>
    </ligand>
</feature>
<feature type="binding site" evidence="1">
    <location>
        <position position="169"/>
    </location>
    <ligand>
        <name>(2E)-4-hydroxy-3-methylbut-2-enyl diphosphate</name>
        <dbReference type="ChEBI" id="CHEBI:128753"/>
    </ligand>
</feature>
<feature type="binding site" evidence="1">
    <location>
        <position position="199"/>
    </location>
    <ligand>
        <name>[4Fe-4S] cluster</name>
        <dbReference type="ChEBI" id="CHEBI:49883"/>
    </ligand>
</feature>
<feature type="binding site" evidence="1">
    <location>
        <position position="227"/>
    </location>
    <ligand>
        <name>(2E)-4-hydroxy-3-methylbut-2-enyl diphosphate</name>
        <dbReference type="ChEBI" id="CHEBI:128753"/>
    </ligand>
</feature>
<feature type="binding site" evidence="1">
    <location>
        <position position="227"/>
    </location>
    <ligand>
        <name>dimethylallyl diphosphate</name>
        <dbReference type="ChEBI" id="CHEBI:57623"/>
    </ligand>
</feature>
<feature type="binding site" evidence="1">
    <location>
        <position position="227"/>
    </location>
    <ligand>
        <name>isopentenyl diphosphate</name>
        <dbReference type="ChEBI" id="CHEBI:128769"/>
    </ligand>
</feature>
<feature type="binding site" evidence="1">
    <location>
        <position position="228"/>
    </location>
    <ligand>
        <name>(2E)-4-hydroxy-3-methylbut-2-enyl diphosphate</name>
        <dbReference type="ChEBI" id="CHEBI:128753"/>
    </ligand>
</feature>
<feature type="binding site" evidence="1">
    <location>
        <position position="228"/>
    </location>
    <ligand>
        <name>dimethylallyl diphosphate</name>
        <dbReference type="ChEBI" id="CHEBI:57623"/>
    </ligand>
</feature>
<feature type="binding site" evidence="1">
    <location>
        <position position="228"/>
    </location>
    <ligand>
        <name>isopentenyl diphosphate</name>
        <dbReference type="ChEBI" id="CHEBI:128769"/>
    </ligand>
</feature>
<feature type="binding site" evidence="1">
    <location>
        <position position="229"/>
    </location>
    <ligand>
        <name>(2E)-4-hydroxy-3-methylbut-2-enyl diphosphate</name>
        <dbReference type="ChEBI" id="CHEBI:128753"/>
    </ligand>
</feature>
<feature type="binding site" evidence="1">
    <location>
        <position position="229"/>
    </location>
    <ligand>
        <name>dimethylallyl diphosphate</name>
        <dbReference type="ChEBI" id="CHEBI:57623"/>
    </ligand>
</feature>
<feature type="binding site" evidence="1">
    <location>
        <position position="229"/>
    </location>
    <ligand>
        <name>isopentenyl diphosphate</name>
        <dbReference type="ChEBI" id="CHEBI:128769"/>
    </ligand>
</feature>
<feature type="binding site" evidence="1">
    <location>
        <position position="271"/>
    </location>
    <ligand>
        <name>(2E)-4-hydroxy-3-methylbut-2-enyl diphosphate</name>
        <dbReference type="ChEBI" id="CHEBI:128753"/>
    </ligand>
</feature>
<feature type="binding site" evidence="1">
    <location>
        <position position="271"/>
    </location>
    <ligand>
        <name>dimethylallyl diphosphate</name>
        <dbReference type="ChEBI" id="CHEBI:57623"/>
    </ligand>
</feature>
<feature type="binding site" evidence="1">
    <location>
        <position position="271"/>
    </location>
    <ligand>
        <name>isopentenyl diphosphate</name>
        <dbReference type="ChEBI" id="CHEBI:128769"/>
    </ligand>
</feature>
<gene>
    <name evidence="1" type="primary">ispH</name>
    <name type="ordered locus">PXO_05537</name>
</gene>
<proteinExistence type="inferred from homology"/>
<accession>B2STC6</accession>
<dbReference type="EC" id="1.17.7.4" evidence="1"/>
<dbReference type="EMBL" id="CP000967">
    <property type="protein sequence ID" value="ACD58171.1"/>
    <property type="molecule type" value="Genomic_DNA"/>
</dbReference>
<dbReference type="RefSeq" id="WP_011258401.1">
    <property type="nucleotide sequence ID" value="NC_010717.2"/>
</dbReference>
<dbReference type="SMR" id="B2STC6"/>
<dbReference type="KEGG" id="xop:PXO_05537"/>
<dbReference type="eggNOG" id="COG0761">
    <property type="taxonomic scope" value="Bacteria"/>
</dbReference>
<dbReference type="HOGENOM" id="CLU_027486_1_0_6"/>
<dbReference type="UniPathway" id="UPA00056">
    <property type="reaction ID" value="UER00097"/>
</dbReference>
<dbReference type="UniPathway" id="UPA00059">
    <property type="reaction ID" value="UER00105"/>
</dbReference>
<dbReference type="Proteomes" id="UP000001740">
    <property type="component" value="Chromosome"/>
</dbReference>
<dbReference type="GO" id="GO:0051539">
    <property type="term" value="F:4 iron, 4 sulfur cluster binding"/>
    <property type="evidence" value="ECO:0007669"/>
    <property type="project" value="UniProtKB-UniRule"/>
</dbReference>
<dbReference type="GO" id="GO:0051745">
    <property type="term" value="F:4-hydroxy-3-methylbut-2-enyl diphosphate reductase activity"/>
    <property type="evidence" value="ECO:0007669"/>
    <property type="project" value="UniProtKB-UniRule"/>
</dbReference>
<dbReference type="GO" id="GO:0046872">
    <property type="term" value="F:metal ion binding"/>
    <property type="evidence" value="ECO:0007669"/>
    <property type="project" value="UniProtKB-KW"/>
</dbReference>
<dbReference type="GO" id="GO:0050992">
    <property type="term" value="P:dimethylallyl diphosphate biosynthetic process"/>
    <property type="evidence" value="ECO:0007669"/>
    <property type="project" value="UniProtKB-UniRule"/>
</dbReference>
<dbReference type="GO" id="GO:0019288">
    <property type="term" value="P:isopentenyl diphosphate biosynthetic process, methylerythritol 4-phosphate pathway"/>
    <property type="evidence" value="ECO:0007669"/>
    <property type="project" value="UniProtKB-UniRule"/>
</dbReference>
<dbReference type="GO" id="GO:0016114">
    <property type="term" value="P:terpenoid biosynthetic process"/>
    <property type="evidence" value="ECO:0007669"/>
    <property type="project" value="UniProtKB-UniRule"/>
</dbReference>
<dbReference type="CDD" id="cd13944">
    <property type="entry name" value="lytB_ispH"/>
    <property type="match status" value="1"/>
</dbReference>
<dbReference type="Gene3D" id="3.40.50.11270">
    <property type="match status" value="1"/>
</dbReference>
<dbReference type="Gene3D" id="3.40.1010.20">
    <property type="entry name" value="4-hydroxy-3-methylbut-2-enyl diphosphate reductase, catalytic domain"/>
    <property type="match status" value="2"/>
</dbReference>
<dbReference type="HAMAP" id="MF_00191">
    <property type="entry name" value="IspH"/>
    <property type="match status" value="1"/>
</dbReference>
<dbReference type="InterPro" id="IPR003451">
    <property type="entry name" value="LytB/IspH"/>
</dbReference>
<dbReference type="NCBIfam" id="TIGR00216">
    <property type="entry name" value="ispH_lytB"/>
    <property type="match status" value="1"/>
</dbReference>
<dbReference type="NCBIfam" id="NF002188">
    <property type="entry name" value="PRK01045.1-2"/>
    <property type="match status" value="1"/>
</dbReference>
<dbReference type="NCBIfam" id="NF002190">
    <property type="entry name" value="PRK01045.1-4"/>
    <property type="match status" value="1"/>
</dbReference>
<dbReference type="PANTHER" id="PTHR30426">
    <property type="entry name" value="4-HYDROXY-3-METHYLBUT-2-ENYL DIPHOSPHATE REDUCTASE"/>
    <property type="match status" value="1"/>
</dbReference>
<dbReference type="PANTHER" id="PTHR30426:SF0">
    <property type="entry name" value="4-HYDROXY-3-METHYLBUT-2-ENYL DIPHOSPHATE REDUCTASE"/>
    <property type="match status" value="1"/>
</dbReference>
<dbReference type="Pfam" id="PF02401">
    <property type="entry name" value="LYTB"/>
    <property type="match status" value="1"/>
</dbReference>
<protein>
    <recommendedName>
        <fullName evidence="1">4-hydroxy-3-methylbut-2-enyl diphosphate reductase</fullName>
        <shortName evidence="1">HMBPP reductase</shortName>
        <ecNumber evidence="1">1.17.7.4</ecNumber>
    </recommendedName>
</protein>